<gene>
    <name evidence="1" type="primary">acpP</name>
    <name type="ordered locus">MCA2000</name>
</gene>
<sequence>MSDIAERVKKIVAEQLGVKDEISNEASFVDDLGADSLDTVELVMALEEEFECEIPDEDAEKITTVQQAIDYIQSHT</sequence>
<reference key="1">
    <citation type="journal article" date="2004" name="PLoS Biol.">
        <title>Genomic insights into methanotrophy: the complete genome sequence of Methylococcus capsulatus (Bath).</title>
        <authorList>
            <person name="Ward N.L."/>
            <person name="Larsen O."/>
            <person name="Sakwa J."/>
            <person name="Bruseth L."/>
            <person name="Khouri H.M."/>
            <person name="Durkin A.S."/>
            <person name="Dimitrov G."/>
            <person name="Jiang L."/>
            <person name="Scanlan D."/>
            <person name="Kang K.H."/>
            <person name="Lewis M.R."/>
            <person name="Nelson K.E."/>
            <person name="Methe B.A."/>
            <person name="Wu M."/>
            <person name="Heidelberg J.F."/>
            <person name="Paulsen I.T."/>
            <person name="Fouts D.E."/>
            <person name="Ravel J."/>
            <person name="Tettelin H."/>
            <person name="Ren Q."/>
            <person name="Read T.D."/>
            <person name="DeBoy R.T."/>
            <person name="Seshadri R."/>
            <person name="Salzberg S.L."/>
            <person name="Jensen H.B."/>
            <person name="Birkeland N.K."/>
            <person name="Nelson W.C."/>
            <person name="Dodson R.J."/>
            <person name="Grindhaug S.H."/>
            <person name="Holt I.E."/>
            <person name="Eidhammer I."/>
            <person name="Jonasen I."/>
            <person name="Vanaken S."/>
            <person name="Utterback T.R."/>
            <person name="Feldblyum T.V."/>
            <person name="Fraser C.M."/>
            <person name="Lillehaug J.R."/>
            <person name="Eisen J.A."/>
        </authorList>
    </citation>
    <scope>NUCLEOTIDE SEQUENCE [LARGE SCALE GENOMIC DNA]</scope>
    <source>
        <strain>ATCC 33009 / NCIMB 11132 / Bath</strain>
    </source>
</reference>
<evidence type="ECO:0000255" key="1">
    <source>
        <dbReference type="HAMAP-Rule" id="MF_01217"/>
    </source>
</evidence>
<evidence type="ECO:0000255" key="2">
    <source>
        <dbReference type="PROSITE-ProRule" id="PRU00258"/>
    </source>
</evidence>
<keyword id="KW-0963">Cytoplasm</keyword>
<keyword id="KW-0275">Fatty acid biosynthesis</keyword>
<keyword id="KW-0276">Fatty acid metabolism</keyword>
<keyword id="KW-0444">Lipid biosynthesis</keyword>
<keyword id="KW-0443">Lipid metabolism</keyword>
<keyword id="KW-0596">Phosphopantetheine</keyword>
<keyword id="KW-0597">Phosphoprotein</keyword>
<keyword id="KW-1185">Reference proteome</keyword>
<feature type="chain" id="PRO_0000180154" description="Acyl carrier protein">
    <location>
        <begin position="1"/>
        <end position="76"/>
    </location>
</feature>
<feature type="domain" description="Carrier" evidence="2">
    <location>
        <begin position="2"/>
        <end position="76"/>
    </location>
</feature>
<feature type="modified residue" description="O-(pantetheine 4'-phosphoryl)serine" evidence="2">
    <location>
        <position position="36"/>
    </location>
</feature>
<proteinExistence type="inferred from homology"/>
<name>ACP_METCA</name>
<comment type="function">
    <text evidence="1">Carrier of the growing fatty acid chain in fatty acid biosynthesis.</text>
</comment>
<comment type="pathway">
    <text evidence="1">Lipid metabolism; fatty acid biosynthesis.</text>
</comment>
<comment type="subcellular location">
    <subcellularLocation>
        <location evidence="1">Cytoplasm</location>
    </subcellularLocation>
</comment>
<comment type="PTM">
    <text evidence="1">4'-phosphopantetheine is transferred from CoA to a specific serine of apo-ACP by AcpS. This modification is essential for activity because fatty acids are bound in thioester linkage to the sulfhydryl of the prosthetic group.</text>
</comment>
<comment type="similarity">
    <text evidence="1">Belongs to the acyl carrier protein (ACP) family.</text>
</comment>
<organism>
    <name type="scientific">Methylococcus capsulatus (strain ATCC 33009 / NCIMB 11132 / Bath)</name>
    <dbReference type="NCBI Taxonomy" id="243233"/>
    <lineage>
        <taxon>Bacteria</taxon>
        <taxon>Pseudomonadati</taxon>
        <taxon>Pseudomonadota</taxon>
        <taxon>Gammaproteobacteria</taxon>
        <taxon>Methylococcales</taxon>
        <taxon>Methylococcaceae</taxon>
        <taxon>Methylococcus</taxon>
    </lineage>
</organism>
<protein>
    <recommendedName>
        <fullName evidence="1">Acyl carrier protein</fullName>
        <shortName evidence="1">ACP</shortName>
    </recommendedName>
</protein>
<dbReference type="EMBL" id="AE017282">
    <property type="protein sequence ID" value="AAU91787.1"/>
    <property type="molecule type" value="Genomic_DNA"/>
</dbReference>
<dbReference type="RefSeq" id="WP_010961245.1">
    <property type="nucleotide sequence ID" value="NC_002977.6"/>
</dbReference>
<dbReference type="SMR" id="Q606L6"/>
<dbReference type="STRING" id="243233.MCA2000"/>
<dbReference type="GeneID" id="88224228"/>
<dbReference type="KEGG" id="mca:MCA2000"/>
<dbReference type="eggNOG" id="COG0236">
    <property type="taxonomic scope" value="Bacteria"/>
</dbReference>
<dbReference type="HOGENOM" id="CLU_108696_5_1_6"/>
<dbReference type="UniPathway" id="UPA00094"/>
<dbReference type="Proteomes" id="UP000006821">
    <property type="component" value="Chromosome"/>
</dbReference>
<dbReference type="GO" id="GO:0005829">
    <property type="term" value="C:cytosol"/>
    <property type="evidence" value="ECO:0007669"/>
    <property type="project" value="TreeGrafter"/>
</dbReference>
<dbReference type="GO" id="GO:0016020">
    <property type="term" value="C:membrane"/>
    <property type="evidence" value="ECO:0007669"/>
    <property type="project" value="GOC"/>
</dbReference>
<dbReference type="GO" id="GO:0000035">
    <property type="term" value="F:acyl binding"/>
    <property type="evidence" value="ECO:0007669"/>
    <property type="project" value="TreeGrafter"/>
</dbReference>
<dbReference type="GO" id="GO:0000036">
    <property type="term" value="F:acyl carrier activity"/>
    <property type="evidence" value="ECO:0007669"/>
    <property type="project" value="UniProtKB-UniRule"/>
</dbReference>
<dbReference type="GO" id="GO:0009245">
    <property type="term" value="P:lipid A biosynthetic process"/>
    <property type="evidence" value="ECO:0007669"/>
    <property type="project" value="TreeGrafter"/>
</dbReference>
<dbReference type="FunFam" id="1.10.1200.10:FF:000001">
    <property type="entry name" value="Acyl carrier protein"/>
    <property type="match status" value="1"/>
</dbReference>
<dbReference type="Gene3D" id="1.10.1200.10">
    <property type="entry name" value="ACP-like"/>
    <property type="match status" value="1"/>
</dbReference>
<dbReference type="HAMAP" id="MF_01217">
    <property type="entry name" value="Acyl_carrier"/>
    <property type="match status" value="1"/>
</dbReference>
<dbReference type="InterPro" id="IPR003231">
    <property type="entry name" value="ACP"/>
</dbReference>
<dbReference type="InterPro" id="IPR036736">
    <property type="entry name" value="ACP-like_sf"/>
</dbReference>
<dbReference type="InterPro" id="IPR009081">
    <property type="entry name" value="PP-bd_ACP"/>
</dbReference>
<dbReference type="InterPro" id="IPR006162">
    <property type="entry name" value="Ppantetheine_attach_site"/>
</dbReference>
<dbReference type="NCBIfam" id="TIGR00517">
    <property type="entry name" value="acyl_carrier"/>
    <property type="match status" value="1"/>
</dbReference>
<dbReference type="NCBIfam" id="NF002148">
    <property type="entry name" value="PRK00982.1-2"/>
    <property type="match status" value="1"/>
</dbReference>
<dbReference type="NCBIfam" id="NF002149">
    <property type="entry name" value="PRK00982.1-3"/>
    <property type="match status" value="1"/>
</dbReference>
<dbReference type="NCBIfam" id="NF002150">
    <property type="entry name" value="PRK00982.1-4"/>
    <property type="match status" value="1"/>
</dbReference>
<dbReference type="NCBIfam" id="NF002151">
    <property type="entry name" value="PRK00982.1-5"/>
    <property type="match status" value="1"/>
</dbReference>
<dbReference type="PANTHER" id="PTHR20863">
    <property type="entry name" value="ACYL CARRIER PROTEIN"/>
    <property type="match status" value="1"/>
</dbReference>
<dbReference type="PANTHER" id="PTHR20863:SF76">
    <property type="entry name" value="CARRIER DOMAIN-CONTAINING PROTEIN"/>
    <property type="match status" value="1"/>
</dbReference>
<dbReference type="Pfam" id="PF00550">
    <property type="entry name" value="PP-binding"/>
    <property type="match status" value="1"/>
</dbReference>
<dbReference type="SUPFAM" id="SSF47336">
    <property type="entry name" value="ACP-like"/>
    <property type="match status" value="1"/>
</dbReference>
<dbReference type="PROSITE" id="PS50075">
    <property type="entry name" value="CARRIER"/>
    <property type="match status" value="1"/>
</dbReference>
<dbReference type="PROSITE" id="PS00012">
    <property type="entry name" value="PHOSPHOPANTETHEINE"/>
    <property type="match status" value="1"/>
</dbReference>
<accession>Q606L6</accession>